<feature type="chain" id="PRO_1000125151" description="Fluoride-specific ion channel FluC">
    <location>
        <begin position="1"/>
        <end position="127"/>
    </location>
</feature>
<feature type="transmembrane region" description="Helical" evidence="1">
    <location>
        <begin position="4"/>
        <end position="24"/>
    </location>
</feature>
<feature type="transmembrane region" description="Helical" evidence="1">
    <location>
        <begin position="35"/>
        <end position="55"/>
    </location>
</feature>
<feature type="transmembrane region" description="Helical" evidence="1">
    <location>
        <begin position="71"/>
        <end position="91"/>
    </location>
</feature>
<feature type="transmembrane region" description="Helical" evidence="1">
    <location>
        <begin position="103"/>
        <end position="123"/>
    </location>
</feature>
<feature type="binding site" evidence="1">
    <location>
        <position position="75"/>
    </location>
    <ligand>
        <name>Na(+)</name>
        <dbReference type="ChEBI" id="CHEBI:29101"/>
        <note>structural</note>
    </ligand>
</feature>
<feature type="binding site" evidence="1">
    <location>
        <position position="78"/>
    </location>
    <ligand>
        <name>Na(+)</name>
        <dbReference type="ChEBI" id="CHEBI:29101"/>
        <note>structural</note>
    </ligand>
</feature>
<gene>
    <name evidence="1" type="primary">fluC</name>
    <name evidence="1" type="synonym">crcB</name>
    <name type="ordered locus">SeD_A0731</name>
</gene>
<proteinExistence type="inferred from homology"/>
<protein>
    <recommendedName>
        <fullName evidence="1">Fluoride-specific ion channel FluC</fullName>
    </recommendedName>
</protein>
<keyword id="KW-0997">Cell inner membrane</keyword>
<keyword id="KW-1003">Cell membrane</keyword>
<keyword id="KW-0407">Ion channel</keyword>
<keyword id="KW-0406">Ion transport</keyword>
<keyword id="KW-0472">Membrane</keyword>
<keyword id="KW-0479">Metal-binding</keyword>
<keyword id="KW-0915">Sodium</keyword>
<keyword id="KW-0812">Transmembrane</keyword>
<keyword id="KW-1133">Transmembrane helix</keyword>
<keyword id="KW-0813">Transport</keyword>
<dbReference type="EMBL" id="CP001144">
    <property type="protein sequence ID" value="ACH75919.1"/>
    <property type="molecule type" value="Genomic_DNA"/>
</dbReference>
<dbReference type="RefSeq" id="WP_000939753.1">
    <property type="nucleotide sequence ID" value="NC_011205.1"/>
</dbReference>
<dbReference type="SMR" id="B5FMM5"/>
<dbReference type="KEGG" id="sed:SeD_A0731"/>
<dbReference type="HOGENOM" id="CLU_114342_3_3_6"/>
<dbReference type="Proteomes" id="UP000008322">
    <property type="component" value="Chromosome"/>
</dbReference>
<dbReference type="GO" id="GO:0005886">
    <property type="term" value="C:plasma membrane"/>
    <property type="evidence" value="ECO:0007669"/>
    <property type="project" value="UniProtKB-SubCell"/>
</dbReference>
<dbReference type="GO" id="GO:0062054">
    <property type="term" value="F:fluoride channel activity"/>
    <property type="evidence" value="ECO:0007669"/>
    <property type="project" value="UniProtKB-UniRule"/>
</dbReference>
<dbReference type="GO" id="GO:0046872">
    <property type="term" value="F:metal ion binding"/>
    <property type="evidence" value="ECO:0007669"/>
    <property type="project" value="UniProtKB-KW"/>
</dbReference>
<dbReference type="GO" id="GO:0140114">
    <property type="term" value="P:cellular detoxification of fluoride"/>
    <property type="evidence" value="ECO:0007669"/>
    <property type="project" value="UniProtKB-UniRule"/>
</dbReference>
<dbReference type="HAMAP" id="MF_00454">
    <property type="entry name" value="FluC"/>
    <property type="match status" value="1"/>
</dbReference>
<dbReference type="InterPro" id="IPR003691">
    <property type="entry name" value="FluC"/>
</dbReference>
<dbReference type="NCBIfam" id="TIGR00494">
    <property type="entry name" value="crcB"/>
    <property type="match status" value="1"/>
</dbReference>
<dbReference type="NCBIfam" id="NF010792">
    <property type="entry name" value="PRK14196.1"/>
    <property type="match status" value="1"/>
</dbReference>
<dbReference type="PANTHER" id="PTHR28259">
    <property type="entry name" value="FLUORIDE EXPORT PROTEIN 1-RELATED"/>
    <property type="match status" value="1"/>
</dbReference>
<dbReference type="PANTHER" id="PTHR28259:SF1">
    <property type="entry name" value="FLUORIDE EXPORT PROTEIN 1-RELATED"/>
    <property type="match status" value="1"/>
</dbReference>
<dbReference type="Pfam" id="PF02537">
    <property type="entry name" value="CRCB"/>
    <property type="match status" value="1"/>
</dbReference>
<organism>
    <name type="scientific">Salmonella dublin (strain CT_02021853)</name>
    <dbReference type="NCBI Taxonomy" id="439851"/>
    <lineage>
        <taxon>Bacteria</taxon>
        <taxon>Pseudomonadati</taxon>
        <taxon>Pseudomonadota</taxon>
        <taxon>Gammaproteobacteria</taxon>
        <taxon>Enterobacterales</taxon>
        <taxon>Enterobacteriaceae</taxon>
        <taxon>Salmonella</taxon>
    </lineage>
</organism>
<accession>B5FMM5</accession>
<sequence length="127" mass="13849">MLQLLLAVFIGGGTGSVARWMLSMRFNPLHQAIPIGTLTANLLGAFIIGMGFAWFNRMTHIDPMWKVLITTGFCGGLTTFSTFSAEVVFLLQEGRFGWALLNVLINLLGSFAMTALAFWLFSAAAAR</sequence>
<name>FLUC_SALDC</name>
<reference key="1">
    <citation type="journal article" date="2011" name="J. Bacteriol.">
        <title>Comparative genomics of 28 Salmonella enterica isolates: evidence for CRISPR-mediated adaptive sublineage evolution.</title>
        <authorList>
            <person name="Fricke W.F."/>
            <person name="Mammel M.K."/>
            <person name="McDermott P.F."/>
            <person name="Tartera C."/>
            <person name="White D.G."/>
            <person name="Leclerc J.E."/>
            <person name="Ravel J."/>
            <person name="Cebula T.A."/>
        </authorList>
    </citation>
    <scope>NUCLEOTIDE SEQUENCE [LARGE SCALE GENOMIC DNA]</scope>
    <source>
        <strain>CT_02021853</strain>
    </source>
</reference>
<evidence type="ECO:0000255" key="1">
    <source>
        <dbReference type="HAMAP-Rule" id="MF_00454"/>
    </source>
</evidence>
<comment type="function">
    <text evidence="1">Fluoride-specific ion channel. Important for reducing fluoride concentration in the cell, thus reducing its toxicity.</text>
</comment>
<comment type="catalytic activity">
    <reaction evidence="1">
        <text>fluoride(in) = fluoride(out)</text>
        <dbReference type="Rhea" id="RHEA:76159"/>
        <dbReference type="ChEBI" id="CHEBI:17051"/>
    </reaction>
    <physiologicalReaction direction="left-to-right" evidence="1">
        <dbReference type="Rhea" id="RHEA:76160"/>
    </physiologicalReaction>
</comment>
<comment type="activity regulation">
    <text evidence="1">Na(+) is not transported, but it plays an essential structural role and its presence is essential for fluoride channel function.</text>
</comment>
<comment type="subcellular location">
    <subcellularLocation>
        <location evidence="1">Cell inner membrane</location>
        <topology evidence="1">Multi-pass membrane protein</topology>
    </subcellularLocation>
</comment>
<comment type="similarity">
    <text evidence="1">Belongs to the fluoride channel Fluc/FEX (TC 1.A.43) family.</text>
</comment>